<dbReference type="EMBL" id="CP001131">
    <property type="protein sequence ID" value="ACG73891.1"/>
    <property type="molecule type" value="Genomic_DNA"/>
</dbReference>
<dbReference type="RefSeq" id="WP_012526672.1">
    <property type="nucleotide sequence ID" value="NC_011145.1"/>
</dbReference>
<dbReference type="SMR" id="B4UH37"/>
<dbReference type="KEGG" id="ank:AnaeK_2666"/>
<dbReference type="HOGENOM" id="CLU_069688_2_1_7"/>
<dbReference type="OrthoDB" id="5525801at2"/>
<dbReference type="Proteomes" id="UP000001871">
    <property type="component" value="Chromosome"/>
</dbReference>
<dbReference type="GO" id="GO:0005524">
    <property type="term" value="F:ATP binding"/>
    <property type="evidence" value="ECO:0007669"/>
    <property type="project" value="UniProtKB-UniRule"/>
</dbReference>
<dbReference type="GO" id="GO:0046933">
    <property type="term" value="F:proton-transporting ATP synthase activity, rotational mechanism"/>
    <property type="evidence" value="ECO:0007669"/>
    <property type="project" value="UniProtKB-UniRule"/>
</dbReference>
<dbReference type="GO" id="GO:0046961">
    <property type="term" value="F:proton-transporting ATPase activity, rotational mechanism"/>
    <property type="evidence" value="ECO:0007669"/>
    <property type="project" value="InterPro"/>
</dbReference>
<dbReference type="GO" id="GO:0042777">
    <property type="term" value="P:proton motive force-driven plasma membrane ATP synthesis"/>
    <property type="evidence" value="ECO:0007669"/>
    <property type="project" value="UniProtKB-UniRule"/>
</dbReference>
<dbReference type="Gene3D" id="1.10.287.3240">
    <property type="match status" value="1"/>
</dbReference>
<dbReference type="HAMAP" id="MF_00271">
    <property type="entry name" value="ATP_synth_D_arch"/>
    <property type="match status" value="1"/>
</dbReference>
<dbReference type="InterPro" id="IPR002699">
    <property type="entry name" value="V_ATPase_D"/>
</dbReference>
<dbReference type="NCBIfam" id="TIGR00309">
    <property type="entry name" value="V_ATPase_subD"/>
    <property type="match status" value="1"/>
</dbReference>
<dbReference type="PANTHER" id="PTHR11671">
    <property type="entry name" value="V-TYPE ATP SYNTHASE SUBUNIT D"/>
    <property type="match status" value="1"/>
</dbReference>
<dbReference type="Pfam" id="PF01813">
    <property type="entry name" value="ATP-synt_D"/>
    <property type="match status" value="1"/>
</dbReference>
<protein>
    <recommendedName>
        <fullName evidence="1">V-type ATP synthase subunit D</fullName>
    </recommendedName>
    <alternativeName>
        <fullName evidence="1">V-ATPase subunit D</fullName>
    </alternativeName>
</protein>
<organism>
    <name type="scientific">Anaeromyxobacter sp. (strain K)</name>
    <dbReference type="NCBI Taxonomy" id="447217"/>
    <lineage>
        <taxon>Bacteria</taxon>
        <taxon>Pseudomonadati</taxon>
        <taxon>Myxococcota</taxon>
        <taxon>Myxococcia</taxon>
        <taxon>Myxococcales</taxon>
        <taxon>Cystobacterineae</taxon>
        <taxon>Anaeromyxobacteraceae</taxon>
        <taxon>Anaeromyxobacter</taxon>
    </lineage>
</organism>
<accession>B4UH37</accession>
<reference key="1">
    <citation type="submission" date="2008-08" db="EMBL/GenBank/DDBJ databases">
        <title>Complete sequence of Anaeromyxobacter sp. K.</title>
        <authorList>
            <consortium name="US DOE Joint Genome Institute"/>
            <person name="Lucas S."/>
            <person name="Copeland A."/>
            <person name="Lapidus A."/>
            <person name="Glavina del Rio T."/>
            <person name="Dalin E."/>
            <person name="Tice H."/>
            <person name="Bruce D."/>
            <person name="Goodwin L."/>
            <person name="Pitluck S."/>
            <person name="Saunders E."/>
            <person name="Brettin T."/>
            <person name="Detter J.C."/>
            <person name="Han C."/>
            <person name="Larimer F."/>
            <person name="Land M."/>
            <person name="Hauser L."/>
            <person name="Kyrpides N."/>
            <person name="Ovchinnikiva G."/>
            <person name="Beliaev A."/>
        </authorList>
    </citation>
    <scope>NUCLEOTIDE SEQUENCE [LARGE SCALE GENOMIC DNA]</scope>
    <source>
        <strain>K</strain>
    </source>
</reference>
<proteinExistence type="inferred from homology"/>
<keyword id="KW-0066">ATP synthesis</keyword>
<keyword id="KW-0375">Hydrogen ion transport</keyword>
<keyword id="KW-0406">Ion transport</keyword>
<keyword id="KW-0813">Transport</keyword>
<name>VATD_ANASK</name>
<feature type="chain" id="PRO_1000114473" description="V-type ATP synthase subunit D">
    <location>
        <begin position="1"/>
        <end position="209"/>
    </location>
</feature>
<sequence>MSRAATTRMGLLEVRARRAVAGKGARLLRAKREVLASELWKLVHDVLEGRARLDEALHRAVKALELAKALEGEERLASLALPAARAVPLAVTVRRVWGVPTPSVAAPPLVRAADQRGSSPVSWGPSGAAAARHHEESLEVLLTIASKELHLARLGEEIQETSRRINALEQLVLPALRSEASRIAAALDERDREDAVRLRRFRARHPRPA</sequence>
<evidence type="ECO:0000255" key="1">
    <source>
        <dbReference type="HAMAP-Rule" id="MF_00271"/>
    </source>
</evidence>
<gene>
    <name evidence="1" type="primary">atpD</name>
    <name type="ordered locus">AnaeK_2666</name>
</gene>
<comment type="function">
    <text evidence="1">Produces ATP from ADP in the presence of a proton gradient across the membrane.</text>
</comment>
<comment type="similarity">
    <text evidence="1">Belongs to the V-ATPase D subunit family.</text>
</comment>